<organism>
    <name type="scientific">Francisella tularensis subsp. holarctica (strain OSU18)</name>
    <dbReference type="NCBI Taxonomy" id="393011"/>
    <lineage>
        <taxon>Bacteria</taxon>
        <taxon>Pseudomonadati</taxon>
        <taxon>Pseudomonadota</taxon>
        <taxon>Gammaproteobacteria</taxon>
        <taxon>Thiotrichales</taxon>
        <taxon>Francisellaceae</taxon>
        <taxon>Francisella</taxon>
    </lineage>
</organism>
<keyword id="KW-0066">ATP synthesis</keyword>
<keyword id="KW-0997">Cell inner membrane</keyword>
<keyword id="KW-1003">Cell membrane</keyword>
<keyword id="KW-0138">CF(0)</keyword>
<keyword id="KW-0375">Hydrogen ion transport</keyword>
<keyword id="KW-0406">Ion transport</keyword>
<keyword id="KW-0472">Membrane</keyword>
<keyword id="KW-0812">Transmembrane</keyword>
<keyword id="KW-1133">Transmembrane helix</keyword>
<keyword id="KW-0813">Transport</keyword>
<evidence type="ECO:0000255" key="1">
    <source>
        <dbReference type="HAMAP-Rule" id="MF_01398"/>
    </source>
</evidence>
<accession>Q0BK80</accession>
<feature type="chain" id="PRO_0000368490" description="ATP synthase subunit b">
    <location>
        <begin position="1"/>
        <end position="156"/>
    </location>
</feature>
<feature type="transmembrane region" description="Helical" evidence="1">
    <location>
        <begin position="5"/>
        <end position="27"/>
    </location>
</feature>
<proteinExistence type="inferred from homology"/>
<sequence length="156" mass="17383">MDINITLIGQMITFAIFIGFTMKFVWPPLRKALEERREKIAEGLASADRASRELEVAKRQSAEILREAKAKATEIVENAYVRAHKVDEQAKEEAIAAADKIKSMAIAEIEQEKVKAKEQLKQELVNLAMAAASKIIAASVDEKASKKVLEDFVEKV</sequence>
<reference key="1">
    <citation type="journal article" date="2006" name="J. Bacteriol.">
        <title>Chromosome rearrangement and diversification of Francisella tularensis revealed by the type B (OSU18) genome sequence.</title>
        <authorList>
            <person name="Petrosino J.F."/>
            <person name="Xiang Q."/>
            <person name="Karpathy S.E."/>
            <person name="Jiang H."/>
            <person name="Yerrapragada S."/>
            <person name="Liu Y."/>
            <person name="Gioia J."/>
            <person name="Hemphill L."/>
            <person name="Gonzalez A."/>
            <person name="Raghavan T.M."/>
            <person name="Uzman A."/>
            <person name="Fox G.E."/>
            <person name="Highlander S."/>
            <person name="Reichard M."/>
            <person name="Morton R.J."/>
            <person name="Clinkenbeard K.D."/>
            <person name="Weinstock G.M."/>
        </authorList>
    </citation>
    <scope>NUCLEOTIDE SEQUENCE [LARGE SCALE GENOMIC DNA]</scope>
    <source>
        <strain>OSU18</strain>
    </source>
</reference>
<comment type="function">
    <text evidence="1">F(1)F(0) ATP synthase produces ATP from ADP in the presence of a proton or sodium gradient. F-type ATPases consist of two structural domains, F(1) containing the extramembraneous catalytic core and F(0) containing the membrane proton channel, linked together by a central stalk and a peripheral stalk. During catalysis, ATP synthesis in the catalytic domain of F(1) is coupled via a rotary mechanism of the central stalk subunits to proton translocation.</text>
</comment>
<comment type="function">
    <text evidence="1">Component of the F(0) channel, it forms part of the peripheral stalk, linking F(1) to F(0).</text>
</comment>
<comment type="subunit">
    <text evidence="1">F-type ATPases have 2 components, F(1) - the catalytic core - and F(0) - the membrane proton channel. F(1) has five subunits: alpha(3), beta(3), gamma(1), delta(1), epsilon(1). F(0) has three main subunits: a(1), b(2) and c(10-14). The alpha and beta chains form an alternating ring which encloses part of the gamma chain. F(1) is attached to F(0) by a central stalk formed by the gamma and epsilon chains, while a peripheral stalk is formed by the delta and b chains.</text>
</comment>
<comment type="subcellular location">
    <subcellularLocation>
        <location evidence="1">Cell inner membrane</location>
        <topology evidence="1">Single-pass membrane protein</topology>
    </subcellularLocation>
</comment>
<comment type="similarity">
    <text evidence="1">Belongs to the ATPase B chain family.</text>
</comment>
<protein>
    <recommendedName>
        <fullName evidence="1">ATP synthase subunit b</fullName>
    </recommendedName>
    <alternativeName>
        <fullName evidence="1">ATP synthase F(0) sector subunit b</fullName>
    </alternativeName>
    <alternativeName>
        <fullName evidence="1">ATPase subunit I</fullName>
    </alternativeName>
    <alternativeName>
        <fullName evidence="1">F-type ATPase subunit b</fullName>
        <shortName evidence="1">F-ATPase subunit b</shortName>
    </alternativeName>
</protein>
<gene>
    <name evidence="1" type="primary">atpF</name>
    <name type="ordered locus">FTH_1736</name>
</gene>
<dbReference type="EMBL" id="CP000437">
    <property type="protein sequence ID" value="ABI83504.1"/>
    <property type="molecule type" value="Genomic_DNA"/>
</dbReference>
<dbReference type="RefSeq" id="WP_003017342.1">
    <property type="nucleotide sequence ID" value="NC_017463.1"/>
</dbReference>
<dbReference type="SMR" id="Q0BK80"/>
<dbReference type="KEGG" id="fth:FTH_1736"/>
<dbReference type="GO" id="GO:0005886">
    <property type="term" value="C:plasma membrane"/>
    <property type="evidence" value="ECO:0007669"/>
    <property type="project" value="UniProtKB-SubCell"/>
</dbReference>
<dbReference type="GO" id="GO:0045259">
    <property type="term" value="C:proton-transporting ATP synthase complex"/>
    <property type="evidence" value="ECO:0007669"/>
    <property type="project" value="UniProtKB-KW"/>
</dbReference>
<dbReference type="GO" id="GO:0046933">
    <property type="term" value="F:proton-transporting ATP synthase activity, rotational mechanism"/>
    <property type="evidence" value="ECO:0007669"/>
    <property type="project" value="UniProtKB-UniRule"/>
</dbReference>
<dbReference type="GO" id="GO:0046961">
    <property type="term" value="F:proton-transporting ATPase activity, rotational mechanism"/>
    <property type="evidence" value="ECO:0007669"/>
    <property type="project" value="TreeGrafter"/>
</dbReference>
<dbReference type="CDD" id="cd06503">
    <property type="entry name" value="ATP-synt_Fo_b"/>
    <property type="match status" value="1"/>
</dbReference>
<dbReference type="Gene3D" id="6.10.250.1580">
    <property type="match status" value="1"/>
</dbReference>
<dbReference type="HAMAP" id="MF_01398">
    <property type="entry name" value="ATP_synth_b_bprime"/>
    <property type="match status" value="1"/>
</dbReference>
<dbReference type="InterPro" id="IPR028987">
    <property type="entry name" value="ATP_synth_B-like_membr_sf"/>
</dbReference>
<dbReference type="InterPro" id="IPR002146">
    <property type="entry name" value="ATP_synth_b/b'su_bac/chlpt"/>
</dbReference>
<dbReference type="InterPro" id="IPR005864">
    <property type="entry name" value="ATP_synth_F0_bsu_bac"/>
</dbReference>
<dbReference type="InterPro" id="IPR050059">
    <property type="entry name" value="ATP_synthase_B_chain"/>
</dbReference>
<dbReference type="NCBIfam" id="TIGR01144">
    <property type="entry name" value="ATP_synt_b"/>
    <property type="match status" value="1"/>
</dbReference>
<dbReference type="NCBIfam" id="NF004411">
    <property type="entry name" value="PRK05759.1-2"/>
    <property type="match status" value="1"/>
</dbReference>
<dbReference type="PANTHER" id="PTHR33445:SF1">
    <property type="entry name" value="ATP SYNTHASE SUBUNIT B"/>
    <property type="match status" value="1"/>
</dbReference>
<dbReference type="PANTHER" id="PTHR33445">
    <property type="entry name" value="ATP SYNTHASE SUBUNIT B', CHLOROPLASTIC"/>
    <property type="match status" value="1"/>
</dbReference>
<dbReference type="Pfam" id="PF00430">
    <property type="entry name" value="ATP-synt_B"/>
    <property type="match status" value="1"/>
</dbReference>
<dbReference type="SUPFAM" id="SSF81573">
    <property type="entry name" value="F1F0 ATP synthase subunit B, membrane domain"/>
    <property type="match status" value="1"/>
</dbReference>
<name>ATPF_FRATO</name>